<sequence>MTNSPLSYKLIRRSAGNSYCQPSCEPTGRCARSCVHALLWRRTTTARHYSGHLRLAPRMYKRRRPDHMMKRNSPSYTGDHKT</sequence>
<feature type="chain" id="PRO_0000309060" description="Putative uncharacterized protein YOR072W-A">
    <location>
        <begin position="1"/>
        <end position="82"/>
    </location>
</feature>
<feature type="region of interest" description="Disordered" evidence="1">
    <location>
        <begin position="60"/>
        <end position="82"/>
    </location>
</feature>
<protein>
    <recommendedName>
        <fullName>Putative uncharacterized protein YOR072W-A</fullName>
    </recommendedName>
</protein>
<comment type="miscellaneous">
    <text evidence="2">Completely overlaps YOR072W.</text>
</comment>
<comment type="caution">
    <text evidence="3">Product of a dubious gene prediction unlikely to encode a functional protein. Because of that it is not part of the S.cerevisiae S288c complete/reference proteome set.</text>
</comment>
<proteinExistence type="uncertain"/>
<reference key="1">
    <citation type="journal article" date="1997" name="Yeast">
        <title>The sequence of a 54.7 kb fragment of yeast chromosome XV reveals the presence of two tRNAs and 24 new open reading frames.</title>
        <authorList>
            <person name="Valens M."/>
            <person name="Bohn C."/>
            <person name="Daignan-Fornier B."/>
            <person name="Dang V.-D."/>
            <person name="Bolotin-Fukuhara M."/>
        </authorList>
    </citation>
    <scope>NUCLEOTIDE SEQUENCE [GENOMIC DNA]</scope>
</reference>
<reference key="2">
    <citation type="journal article" date="1997" name="Nature">
        <title>The nucleotide sequence of Saccharomyces cerevisiae chromosome XV.</title>
        <authorList>
            <person name="Dujon B."/>
            <person name="Albermann K."/>
            <person name="Aldea M."/>
            <person name="Alexandraki D."/>
            <person name="Ansorge W."/>
            <person name="Arino J."/>
            <person name="Benes V."/>
            <person name="Bohn C."/>
            <person name="Bolotin-Fukuhara M."/>
            <person name="Bordonne R."/>
            <person name="Boyer J."/>
            <person name="Camasses A."/>
            <person name="Casamayor A."/>
            <person name="Casas C."/>
            <person name="Cheret G."/>
            <person name="Cziepluch C."/>
            <person name="Daignan-Fornier B."/>
            <person name="Dang V.-D."/>
            <person name="de Haan M."/>
            <person name="Delius H."/>
            <person name="Durand P."/>
            <person name="Fairhead C."/>
            <person name="Feldmann H."/>
            <person name="Gaillon L."/>
            <person name="Galisson F."/>
            <person name="Gamo F.-J."/>
            <person name="Gancedo C."/>
            <person name="Goffeau A."/>
            <person name="Goulding S.E."/>
            <person name="Grivell L.A."/>
            <person name="Habbig B."/>
            <person name="Hand N.J."/>
            <person name="Hani J."/>
            <person name="Hattenhorst U."/>
            <person name="Hebling U."/>
            <person name="Hernando Y."/>
            <person name="Herrero E."/>
            <person name="Heumann K."/>
            <person name="Hiesel R."/>
            <person name="Hilger F."/>
            <person name="Hofmann B."/>
            <person name="Hollenberg C.P."/>
            <person name="Hughes B."/>
            <person name="Jauniaux J.-C."/>
            <person name="Kalogeropoulos A."/>
            <person name="Katsoulou C."/>
            <person name="Kordes E."/>
            <person name="Lafuente M.J."/>
            <person name="Landt O."/>
            <person name="Louis E.J."/>
            <person name="Maarse A.C."/>
            <person name="Madania A."/>
            <person name="Mannhaupt G."/>
            <person name="Marck C."/>
            <person name="Martin R.P."/>
            <person name="Mewes H.-W."/>
            <person name="Michaux G."/>
            <person name="Paces V."/>
            <person name="Parle-McDermott A.G."/>
            <person name="Pearson B.M."/>
            <person name="Perrin A."/>
            <person name="Pettersson B."/>
            <person name="Poch O."/>
            <person name="Pohl T.M."/>
            <person name="Poirey R."/>
            <person name="Portetelle D."/>
            <person name="Pujol A."/>
            <person name="Purnelle B."/>
            <person name="Ramezani Rad M."/>
            <person name="Rechmann S."/>
            <person name="Schwager C."/>
            <person name="Schweizer M."/>
            <person name="Sor F."/>
            <person name="Sterky F."/>
            <person name="Tarassov I.A."/>
            <person name="Teodoru C."/>
            <person name="Tettelin H."/>
            <person name="Thierry A."/>
            <person name="Tobiasch E."/>
            <person name="Tzermia M."/>
            <person name="Uhlen M."/>
            <person name="Unseld M."/>
            <person name="Valens M."/>
            <person name="Vandenbol M."/>
            <person name="Vetter I."/>
            <person name="Vlcek C."/>
            <person name="Voet M."/>
            <person name="Volckaert G."/>
            <person name="Voss H."/>
            <person name="Wambutt R."/>
            <person name="Wedler H."/>
            <person name="Wiemann S."/>
            <person name="Winsor B."/>
            <person name="Wolfe K.H."/>
            <person name="Zollner A."/>
            <person name="Zumstein E."/>
            <person name="Kleine K."/>
        </authorList>
    </citation>
    <scope>NUCLEOTIDE SEQUENCE [LARGE SCALE GENOMIC DNA]</scope>
    <source>
        <strain>ATCC 204508 / S288c</strain>
    </source>
</reference>
<reference key="3">
    <citation type="journal article" date="2014" name="G3 (Bethesda)">
        <title>The reference genome sequence of Saccharomyces cerevisiae: Then and now.</title>
        <authorList>
            <person name="Engel S.R."/>
            <person name="Dietrich F.S."/>
            <person name="Fisk D.G."/>
            <person name="Binkley G."/>
            <person name="Balakrishnan R."/>
            <person name="Costanzo M.C."/>
            <person name="Dwight S.S."/>
            <person name="Hitz B.C."/>
            <person name="Karra K."/>
            <person name="Nash R.S."/>
            <person name="Weng S."/>
            <person name="Wong E.D."/>
            <person name="Lloyd P."/>
            <person name="Skrzypek M.S."/>
            <person name="Miyasato S.R."/>
            <person name="Simison M."/>
            <person name="Cherry J.M."/>
        </authorList>
    </citation>
    <scope>GENOME REANNOTATION</scope>
    <source>
        <strain>ATCC 204508 / S288c</strain>
    </source>
</reference>
<reference key="4">
    <citation type="journal article" date="2003" name="Genome Res.">
        <title>Systematic discovery of new genes in the Saccharomyces cerevisiae genome.</title>
        <authorList>
            <person name="Kessler M.M."/>
            <person name="Zeng Q."/>
            <person name="Hogan S."/>
            <person name="Cook R."/>
            <person name="Morales A.J."/>
            <person name="Cottarel G."/>
        </authorList>
    </citation>
    <scope>GENOME REANNOTATION</scope>
</reference>
<name>YO72A_YEAST</name>
<gene>
    <name type="ordered locus">YOR072W-A</name>
    <name type="ORF">smORF598</name>
</gene>
<organism>
    <name type="scientific">Saccharomyces cerevisiae (strain ATCC 204508 / S288c)</name>
    <name type="common">Baker's yeast</name>
    <dbReference type="NCBI Taxonomy" id="559292"/>
    <lineage>
        <taxon>Eukaryota</taxon>
        <taxon>Fungi</taxon>
        <taxon>Dikarya</taxon>
        <taxon>Ascomycota</taxon>
        <taxon>Saccharomycotina</taxon>
        <taxon>Saccharomycetes</taxon>
        <taxon>Saccharomycetales</taxon>
        <taxon>Saccharomycetaceae</taxon>
        <taxon>Saccharomyces</taxon>
    </lineage>
</organism>
<evidence type="ECO:0000256" key="1">
    <source>
        <dbReference type="SAM" id="MobiDB-lite"/>
    </source>
</evidence>
<evidence type="ECO:0000305" key="2"/>
<evidence type="ECO:0000305" key="3">
    <source>
    </source>
</evidence>
<accession>P0C5R2</accession>
<dbReference type="EMBL" id="Z70678">
    <property type="status" value="NOT_ANNOTATED_CDS"/>
    <property type="molecule type" value="Genomic_DNA"/>
</dbReference>
<dbReference type="EMBL" id="Z74980">
    <property type="status" value="NOT_ANNOTATED_CDS"/>
    <property type="molecule type" value="Genomic_DNA"/>
</dbReference>
<dbReference type="EMBL" id="Z74981">
    <property type="status" value="NOT_ANNOTATED_CDS"/>
    <property type="molecule type" value="Genomic_DNA"/>
</dbReference>
<dbReference type="PaxDb" id="4932-YOR072W-A"/>
<dbReference type="EnsemblFungi" id="YOR072W-A_mRNA">
    <property type="protein sequence ID" value="YOR072W-A"/>
    <property type="gene ID" value="YOR072W-A"/>
</dbReference>
<dbReference type="AGR" id="SGD:S000028582"/>
<dbReference type="SGD" id="S000028582">
    <property type="gene designation" value="YOR072W-A"/>
</dbReference>
<dbReference type="HOGENOM" id="CLU_2559601_0_0_1"/>